<dbReference type="EC" id="5.4.99.62" evidence="1"/>
<dbReference type="EMBL" id="CP000880">
    <property type="protein sequence ID" value="ABX23562.1"/>
    <property type="molecule type" value="Genomic_DNA"/>
</dbReference>
<dbReference type="SMR" id="A9MJQ1"/>
<dbReference type="STRING" id="41514.SARI_03768"/>
<dbReference type="KEGG" id="ses:SARI_03768"/>
<dbReference type="HOGENOM" id="CLU_135498_0_0_6"/>
<dbReference type="UniPathway" id="UPA00916">
    <property type="reaction ID" value="UER00888"/>
</dbReference>
<dbReference type="Proteomes" id="UP000002084">
    <property type="component" value="Chromosome"/>
</dbReference>
<dbReference type="GO" id="GO:0005829">
    <property type="term" value="C:cytosol"/>
    <property type="evidence" value="ECO:0007669"/>
    <property type="project" value="TreeGrafter"/>
</dbReference>
<dbReference type="GO" id="GO:0062193">
    <property type="term" value="F:D-ribose pyranase activity"/>
    <property type="evidence" value="ECO:0007669"/>
    <property type="project" value="UniProtKB-EC"/>
</dbReference>
<dbReference type="GO" id="GO:0016872">
    <property type="term" value="F:intramolecular lyase activity"/>
    <property type="evidence" value="ECO:0007669"/>
    <property type="project" value="UniProtKB-UniRule"/>
</dbReference>
<dbReference type="GO" id="GO:0048029">
    <property type="term" value="F:monosaccharide binding"/>
    <property type="evidence" value="ECO:0007669"/>
    <property type="project" value="InterPro"/>
</dbReference>
<dbReference type="GO" id="GO:0019303">
    <property type="term" value="P:D-ribose catabolic process"/>
    <property type="evidence" value="ECO:0007669"/>
    <property type="project" value="UniProtKB-UniRule"/>
</dbReference>
<dbReference type="FunFam" id="3.40.1650.10:FF:000002">
    <property type="entry name" value="D-ribose pyranase"/>
    <property type="match status" value="1"/>
</dbReference>
<dbReference type="Gene3D" id="3.40.1650.10">
    <property type="entry name" value="RbsD-like domain"/>
    <property type="match status" value="1"/>
</dbReference>
<dbReference type="HAMAP" id="MF_01661">
    <property type="entry name" value="D_rib_pyranase"/>
    <property type="match status" value="1"/>
</dbReference>
<dbReference type="InterPro" id="IPR023064">
    <property type="entry name" value="D-ribose_pyranase"/>
</dbReference>
<dbReference type="InterPro" id="IPR023750">
    <property type="entry name" value="RbsD-like_sf"/>
</dbReference>
<dbReference type="InterPro" id="IPR007721">
    <property type="entry name" value="RbsD_FucU"/>
</dbReference>
<dbReference type="NCBIfam" id="NF008761">
    <property type="entry name" value="PRK11797.1"/>
    <property type="match status" value="1"/>
</dbReference>
<dbReference type="PANTHER" id="PTHR37831">
    <property type="entry name" value="D-RIBOSE PYRANASE"/>
    <property type="match status" value="1"/>
</dbReference>
<dbReference type="PANTHER" id="PTHR37831:SF1">
    <property type="entry name" value="D-RIBOSE PYRANASE"/>
    <property type="match status" value="1"/>
</dbReference>
<dbReference type="Pfam" id="PF05025">
    <property type="entry name" value="RbsD_FucU"/>
    <property type="match status" value="1"/>
</dbReference>
<dbReference type="SUPFAM" id="SSF102546">
    <property type="entry name" value="RbsD-like"/>
    <property type="match status" value="1"/>
</dbReference>
<proteinExistence type="inferred from homology"/>
<accession>A9MJQ1</accession>
<organism>
    <name type="scientific">Salmonella arizonae (strain ATCC BAA-731 / CDC346-86 / RSK2980)</name>
    <dbReference type="NCBI Taxonomy" id="41514"/>
    <lineage>
        <taxon>Bacteria</taxon>
        <taxon>Pseudomonadati</taxon>
        <taxon>Pseudomonadota</taxon>
        <taxon>Gammaproteobacteria</taxon>
        <taxon>Enterobacterales</taxon>
        <taxon>Enterobacteriaceae</taxon>
        <taxon>Salmonella</taxon>
    </lineage>
</organism>
<name>RBSD_SALAR</name>
<protein>
    <recommendedName>
        <fullName evidence="1">D-ribose pyranase</fullName>
        <ecNumber evidence="1">5.4.99.62</ecNumber>
    </recommendedName>
</protein>
<reference key="1">
    <citation type="submission" date="2007-11" db="EMBL/GenBank/DDBJ databases">
        <authorList>
            <consortium name="The Salmonella enterica serovar Arizonae Genome Sequencing Project"/>
            <person name="McClelland M."/>
            <person name="Sanderson E.K."/>
            <person name="Porwollik S."/>
            <person name="Spieth J."/>
            <person name="Clifton W.S."/>
            <person name="Fulton R."/>
            <person name="Chunyan W."/>
            <person name="Wollam A."/>
            <person name="Shah N."/>
            <person name="Pepin K."/>
            <person name="Bhonagiri V."/>
            <person name="Nash W."/>
            <person name="Johnson M."/>
            <person name="Thiruvilangam P."/>
            <person name="Wilson R."/>
        </authorList>
    </citation>
    <scope>NUCLEOTIDE SEQUENCE [LARGE SCALE GENOMIC DNA]</scope>
    <source>
        <strain>ATCC BAA-731 / CDC346-86 / RSK2980</strain>
    </source>
</reference>
<gene>
    <name evidence="1" type="primary">rbsD</name>
    <name type="ordered locus">SARI_03768</name>
</gene>
<evidence type="ECO:0000255" key="1">
    <source>
        <dbReference type="HAMAP-Rule" id="MF_01661"/>
    </source>
</evidence>
<keyword id="KW-0119">Carbohydrate metabolism</keyword>
<keyword id="KW-0963">Cytoplasm</keyword>
<keyword id="KW-0413">Isomerase</keyword>
<keyword id="KW-1185">Reference proteome</keyword>
<sequence length="139" mass="15185">MKKGTVLNSEISSVISRLGHTDTLVVCDAGLPIPNSAARIDMALTQGVPSFMQVVDVVTREMQVEAAILATEIKQQNPQLHETLLTHLEQLQQYQGNTIKISYTTHEQFKKLTADSQAVIRSGECSPYANVILCAGVTF</sequence>
<comment type="function">
    <text evidence="1">Catalyzes the interconversion of beta-pyran and beta-furan forms of D-ribose.</text>
</comment>
<comment type="catalytic activity">
    <reaction evidence="1">
        <text>beta-D-ribopyranose = beta-D-ribofuranose</text>
        <dbReference type="Rhea" id="RHEA:25432"/>
        <dbReference type="ChEBI" id="CHEBI:27476"/>
        <dbReference type="ChEBI" id="CHEBI:47002"/>
        <dbReference type="EC" id="5.4.99.62"/>
    </reaction>
</comment>
<comment type="pathway">
    <text evidence="1">Carbohydrate metabolism; D-ribose degradation; D-ribose 5-phosphate from beta-D-ribopyranose: step 1/2.</text>
</comment>
<comment type="subunit">
    <text evidence="1">Homodecamer.</text>
</comment>
<comment type="subcellular location">
    <subcellularLocation>
        <location evidence="1">Cytoplasm</location>
    </subcellularLocation>
</comment>
<comment type="similarity">
    <text evidence="1">Belongs to the RbsD / FucU family. RbsD subfamily.</text>
</comment>
<feature type="chain" id="PRO_0000346248" description="D-ribose pyranase">
    <location>
        <begin position="1"/>
        <end position="139"/>
    </location>
</feature>
<feature type="active site" description="Proton donor" evidence="1">
    <location>
        <position position="20"/>
    </location>
</feature>
<feature type="binding site" evidence="1">
    <location>
        <position position="28"/>
    </location>
    <ligand>
        <name>substrate</name>
    </ligand>
</feature>
<feature type="binding site" evidence="1">
    <location>
        <position position="106"/>
    </location>
    <ligand>
        <name>substrate</name>
    </ligand>
</feature>
<feature type="binding site" evidence="1">
    <location>
        <begin position="128"/>
        <end position="130"/>
    </location>
    <ligand>
        <name>substrate</name>
    </ligand>
</feature>